<dbReference type="EMBL" id="AE003852">
    <property type="protein sequence ID" value="AAF94014.1"/>
    <property type="molecule type" value="Genomic_DNA"/>
</dbReference>
<dbReference type="PIR" id="G82272">
    <property type="entry name" value="G82272"/>
</dbReference>
<dbReference type="RefSeq" id="NP_230499.1">
    <property type="nucleotide sequence ID" value="NC_002505.1"/>
</dbReference>
<dbReference type="RefSeq" id="WP_000879555.1">
    <property type="nucleotide sequence ID" value="NZ_LT906614.1"/>
</dbReference>
<dbReference type="SMR" id="P0C6Q4"/>
<dbReference type="STRING" id="243277.VC_0852"/>
<dbReference type="DNASU" id="2614519"/>
<dbReference type="EnsemblBacteria" id="AAF94014">
    <property type="protein sequence ID" value="AAF94014"/>
    <property type="gene ID" value="VC_0852"/>
</dbReference>
<dbReference type="KEGG" id="vch:VC_0852"/>
<dbReference type="PATRIC" id="fig|243277.26.peg.812"/>
<dbReference type="eggNOG" id="COG0497">
    <property type="taxonomic scope" value="Bacteria"/>
</dbReference>
<dbReference type="HOGENOM" id="CLU_018297_3_1_6"/>
<dbReference type="Proteomes" id="UP000000584">
    <property type="component" value="Chromosome 1"/>
</dbReference>
<dbReference type="GO" id="GO:0043590">
    <property type="term" value="C:bacterial nucleoid"/>
    <property type="evidence" value="ECO:0000318"/>
    <property type="project" value="GO_Central"/>
</dbReference>
<dbReference type="GO" id="GO:0005524">
    <property type="term" value="F:ATP binding"/>
    <property type="evidence" value="ECO:0007669"/>
    <property type="project" value="UniProtKB-KW"/>
</dbReference>
<dbReference type="GO" id="GO:0016887">
    <property type="term" value="F:ATP hydrolysis activity"/>
    <property type="evidence" value="ECO:0007669"/>
    <property type="project" value="InterPro"/>
</dbReference>
<dbReference type="GO" id="GO:0006310">
    <property type="term" value="P:DNA recombination"/>
    <property type="evidence" value="ECO:0007669"/>
    <property type="project" value="InterPro"/>
</dbReference>
<dbReference type="GO" id="GO:0006302">
    <property type="term" value="P:double-strand break repair"/>
    <property type="evidence" value="ECO:0007669"/>
    <property type="project" value="InterPro"/>
</dbReference>
<dbReference type="GO" id="GO:0009432">
    <property type="term" value="P:SOS response"/>
    <property type="evidence" value="ECO:0000318"/>
    <property type="project" value="GO_Central"/>
</dbReference>
<dbReference type="CDD" id="cd03241">
    <property type="entry name" value="ABC_RecN"/>
    <property type="match status" value="2"/>
</dbReference>
<dbReference type="FunFam" id="3.40.50.300:FF:000319">
    <property type="entry name" value="DNA repair protein RecN"/>
    <property type="match status" value="1"/>
</dbReference>
<dbReference type="FunFam" id="3.40.50.300:FF:000356">
    <property type="entry name" value="DNA repair protein RecN"/>
    <property type="match status" value="1"/>
</dbReference>
<dbReference type="Gene3D" id="3.40.50.300">
    <property type="entry name" value="P-loop containing nucleotide triphosphate hydrolases"/>
    <property type="match status" value="2"/>
</dbReference>
<dbReference type="InterPro" id="IPR004604">
    <property type="entry name" value="DNA_recomb/repair_RecN"/>
</dbReference>
<dbReference type="InterPro" id="IPR027417">
    <property type="entry name" value="P-loop_NTPase"/>
</dbReference>
<dbReference type="InterPro" id="IPR038729">
    <property type="entry name" value="Rad50/SbcC_AAA"/>
</dbReference>
<dbReference type="NCBIfam" id="NF008121">
    <property type="entry name" value="PRK10869.1"/>
    <property type="match status" value="1"/>
</dbReference>
<dbReference type="NCBIfam" id="TIGR00634">
    <property type="entry name" value="recN"/>
    <property type="match status" value="1"/>
</dbReference>
<dbReference type="PANTHER" id="PTHR11059">
    <property type="entry name" value="DNA REPAIR PROTEIN RECN"/>
    <property type="match status" value="1"/>
</dbReference>
<dbReference type="PANTHER" id="PTHR11059:SF0">
    <property type="entry name" value="DNA REPAIR PROTEIN RECN"/>
    <property type="match status" value="1"/>
</dbReference>
<dbReference type="Pfam" id="PF13476">
    <property type="entry name" value="AAA_23"/>
    <property type="match status" value="1"/>
</dbReference>
<dbReference type="PIRSF" id="PIRSF003128">
    <property type="entry name" value="RecN"/>
    <property type="match status" value="1"/>
</dbReference>
<dbReference type="SUPFAM" id="SSF52540">
    <property type="entry name" value="P-loop containing nucleoside triphosphate hydrolases"/>
    <property type="match status" value="1"/>
</dbReference>
<accession>P0C6Q4</accession>
<accession>P52118</accession>
<accession>Q9KTP9</accession>
<protein>
    <recommendedName>
        <fullName>DNA repair protein RecN</fullName>
    </recommendedName>
    <alternativeName>
        <fullName>Recombination protein N</fullName>
    </alternativeName>
</protein>
<name>RECN_VIBCH</name>
<gene>
    <name type="primary">recN</name>
    <name type="ordered locus">VC_0852</name>
</gene>
<reference key="1">
    <citation type="journal article" date="2000" name="Nature">
        <title>DNA sequence of both chromosomes of the cholera pathogen Vibrio cholerae.</title>
        <authorList>
            <person name="Heidelberg J.F."/>
            <person name="Eisen J.A."/>
            <person name="Nelson W.C."/>
            <person name="Clayton R.A."/>
            <person name="Gwinn M.L."/>
            <person name="Dodson R.J."/>
            <person name="Haft D.H."/>
            <person name="Hickey E.K."/>
            <person name="Peterson J.D."/>
            <person name="Umayam L.A."/>
            <person name="Gill S.R."/>
            <person name="Nelson K.E."/>
            <person name="Read T.D."/>
            <person name="Tettelin H."/>
            <person name="Richardson D.L."/>
            <person name="Ermolaeva M.D."/>
            <person name="Vamathevan J.J."/>
            <person name="Bass S."/>
            <person name="Qin H."/>
            <person name="Dragoi I."/>
            <person name="Sellers P."/>
            <person name="McDonald L.A."/>
            <person name="Utterback T.R."/>
            <person name="Fleischmann R.D."/>
            <person name="Nierman W.C."/>
            <person name="White O."/>
            <person name="Salzberg S.L."/>
            <person name="Smith H.O."/>
            <person name="Colwell R.R."/>
            <person name="Mekalanos J.J."/>
            <person name="Venter J.C."/>
            <person name="Fraser C.M."/>
        </authorList>
    </citation>
    <scope>NUCLEOTIDE SEQUENCE [LARGE SCALE GENOMIC DNA]</scope>
    <source>
        <strain>ATCC 39315 / El Tor Inaba N16961</strain>
    </source>
</reference>
<keyword id="KW-0067">ATP-binding</keyword>
<keyword id="KW-0227">DNA damage</keyword>
<keyword id="KW-0234">DNA repair</keyword>
<keyword id="KW-0547">Nucleotide-binding</keyword>
<keyword id="KW-1185">Reference proteome</keyword>
<proteinExistence type="inferred from homology"/>
<feature type="chain" id="PRO_0000188029" description="DNA repair protein RecN">
    <location>
        <begin position="1"/>
        <end position="554"/>
    </location>
</feature>
<feature type="binding site" evidence="2">
    <location>
        <begin position="29"/>
        <end position="36"/>
    </location>
    <ligand>
        <name>ATP</name>
        <dbReference type="ChEBI" id="CHEBI:30616"/>
    </ligand>
</feature>
<sequence>MLAHLSINNFAIVKSLQLELSKGMTTITGETGAGKSIAIDALGLCLGGRAEASMVRQGEDKTEVSAAFHLDNNLLASRWLEDNELLEGKECILRRIITKDGRSKAFINGSPVPLSQLKTLGQLLINVHGQHAHQQLMKPEYQLSMLDQYAGHADLLKATRHAYQNWRQASNQLKQLRENSQQNQAQLQLLEYQIKELNELALGEDEFVELEQEQKRLANSGDLALNCQRAIELLNEGEEVNALGLLQSVSHTLIDLAEMDSKLTALPSMVAEALIQLEETYHELRNYLDSIDVDPERMAYVEERYSKVMSLARKHHVLPEELYQHHQALLQQIAQLDCSDEKMSALASEVDVLYQTFVAAADKLHKSRVRYAKELDKLISQSMHELSMEKAQFKIEVQQDSAHSSPLGFDAVTFLVSTNPGQPLQPIAKVASGGELSRMSLAIQVITAQKVDTPSLIFDEVDVGISGPTAAVVGKLLRKLGESTQVLCVTHLPQVAGCGHHQLFVAKQTKAGKTETQMLKLDQEQRIAELARLLGGSQITESTLANAKELLIAA</sequence>
<evidence type="ECO:0000250" key="1"/>
<evidence type="ECO:0000255" key="2"/>
<evidence type="ECO:0000305" key="3"/>
<comment type="function">
    <text evidence="1">May be involved in recombinational repair of damaged DNA.</text>
</comment>
<comment type="similarity">
    <text evidence="3">Belongs to the RecN family.</text>
</comment>
<organism>
    <name type="scientific">Vibrio cholerae serotype O1 (strain ATCC 39315 / El Tor Inaba N16961)</name>
    <dbReference type="NCBI Taxonomy" id="243277"/>
    <lineage>
        <taxon>Bacteria</taxon>
        <taxon>Pseudomonadati</taxon>
        <taxon>Pseudomonadota</taxon>
        <taxon>Gammaproteobacteria</taxon>
        <taxon>Vibrionales</taxon>
        <taxon>Vibrionaceae</taxon>
        <taxon>Vibrio</taxon>
    </lineage>
</organism>